<dbReference type="EC" id="1.1.1.-"/>
<dbReference type="EMBL" id="M26941">
    <property type="protein sequence ID" value="AAA83520.1"/>
    <property type="molecule type" value="Genomic_DNA"/>
</dbReference>
<dbReference type="RefSeq" id="WP_022743700.1">
    <property type="nucleotide sequence ID" value="NZ_JACGZG010000001.1"/>
</dbReference>
<dbReference type="SMR" id="P13604"/>
<dbReference type="STRING" id="169679.CSACC_03550"/>
<dbReference type="BioCyc" id="MetaCyc:BDHNADPHCLOS-MONOMER"/>
<dbReference type="GO" id="GO:0004022">
    <property type="term" value="F:alcohol dehydrogenase (NAD+) activity"/>
    <property type="evidence" value="ECO:0007669"/>
    <property type="project" value="TreeGrafter"/>
</dbReference>
<dbReference type="GO" id="GO:0046872">
    <property type="term" value="F:metal ion binding"/>
    <property type="evidence" value="ECO:0007669"/>
    <property type="project" value="InterPro"/>
</dbReference>
<dbReference type="CDD" id="cd08179">
    <property type="entry name" value="NADPH_BDH"/>
    <property type="match status" value="1"/>
</dbReference>
<dbReference type="FunFam" id="3.40.50.1970:FF:000003">
    <property type="entry name" value="Alcohol dehydrogenase, iron-containing"/>
    <property type="match status" value="1"/>
</dbReference>
<dbReference type="FunFam" id="1.20.1090.10:FF:000001">
    <property type="entry name" value="Aldehyde-alcohol dehydrogenase"/>
    <property type="match status" value="1"/>
</dbReference>
<dbReference type="Gene3D" id="3.40.50.1970">
    <property type="match status" value="1"/>
</dbReference>
<dbReference type="Gene3D" id="1.20.1090.10">
    <property type="entry name" value="Dehydroquinate synthase-like - alpha domain"/>
    <property type="match status" value="1"/>
</dbReference>
<dbReference type="InterPro" id="IPR001670">
    <property type="entry name" value="ADH_Fe/GldA"/>
</dbReference>
<dbReference type="InterPro" id="IPR056798">
    <property type="entry name" value="ADH_Fe_C"/>
</dbReference>
<dbReference type="InterPro" id="IPR018211">
    <property type="entry name" value="ADH_Fe_CS"/>
</dbReference>
<dbReference type="InterPro" id="IPR039697">
    <property type="entry name" value="Alcohol_dehydrogenase_Fe"/>
</dbReference>
<dbReference type="InterPro" id="IPR034802">
    <property type="entry name" value="NADPH_BDH"/>
</dbReference>
<dbReference type="PANTHER" id="PTHR11496">
    <property type="entry name" value="ALCOHOL DEHYDROGENASE"/>
    <property type="match status" value="1"/>
</dbReference>
<dbReference type="PANTHER" id="PTHR11496:SF83">
    <property type="entry name" value="HYDROXYACID-OXOACID TRANSHYDROGENASE, MITOCHONDRIAL"/>
    <property type="match status" value="1"/>
</dbReference>
<dbReference type="Pfam" id="PF25137">
    <property type="entry name" value="ADH_Fe_C"/>
    <property type="match status" value="1"/>
</dbReference>
<dbReference type="Pfam" id="PF00465">
    <property type="entry name" value="Fe-ADH"/>
    <property type="match status" value="1"/>
</dbReference>
<dbReference type="SUPFAM" id="SSF56796">
    <property type="entry name" value="Dehydroquinate synthase-like"/>
    <property type="match status" value="1"/>
</dbReference>
<dbReference type="PROSITE" id="PS00913">
    <property type="entry name" value="ADH_IRON_1"/>
    <property type="match status" value="1"/>
</dbReference>
<dbReference type="PROSITE" id="PS00060">
    <property type="entry name" value="ADH_IRON_2"/>
    <property type="match status" value="1"/>
</dbReference>
<sequence length="388" mass="43274">MMRFTLPRDIYYGKGSLEQLKNLKGKKAMLVLGGGSMKRFGFVDKVLGYLKEAGIEVKLIEGVEPDPSVETVFKGAELMRQFEPDWIIAMGGGSPIDAAKAMWIFYEHPEKTFDDIKDPFTVPELRNKAKFLAIPSTSGTATEVTAFSVITDYKTEIKYPLADFNITPDVAVVDSELAETMPPKLTAHTGMDALTHAIEAYVATLHSPFTDPLAMQAIEMINEHLFKSYEGDKEAREQMHYAQCLAGMAFSNALLGICHSMAHKTGAVFHIPHGCANAIYLPYVIKFNSKTSLERYAKIAKQISLAGNTNEELVDSLINLVKELNKKMQIPTTLKEYGIHEQEFKNKVDLISERAIGDACTGSNPRQLNKDEMKKIFECVYYGTEVDF</sequence>
<name>ADH1_CLOSA</name>
<feature type="chain" id="PRO_0000087821" description="NADPH-dependent butanol dehydrogenase">
    <location>
        <begin position="1"/>
        <end position="388"/>
    </location>
</feature>
<comment type="function">
    <text>This enzyme has activity using butanol and ethanol as substrates.</text>
</comment>
<comment type="similarity">
    <text evidence="1">Belongs to the iron-containing alcohol dehydrogenase family.</text>
</comment>
<comment type="caution">
    <text evidence="2">Was originally thought to originate from C.acetobutylicum.</text>
</comment>
<proteinExistence type="inferred from homology"/>
<reference key="1">
    <citation type="journal article" date="1989" name="Gene">
        <title>Molecular analysis and nucleotide sequence of the adh1 gene encoding an NADPH-dependent butanol dehydrogenase in the Gram-positive anaerobe Clostridium acetobutylicum.</title>
        <authorList>
            <person name="Youngleson J.S."/>
            <person name="Jones W.A."/>
            <person name="Jones D.T."/>
            <person name="Woods D.R."/>
        </authorList>
    </citation>
    <scope>NUCLEOTIDE SEQUENCE [GENOMIC DNA]</scope>
    <source>
        <strain>ATCC BAA-117 / DSM 13864 / NCP 262</strain>
    </source>
</reference>
<keyword id="KW-0521">NADP</keyword>
<keyword id="KW-0560">Oxidoreductase</keyword>
<protein>
    <recommendedName>
        <fullName>NADPH-dependent butanol dehydrogenase</fullName>
        <shortName>BDH</shortName>
        <ecNumber>1.1.1.-</ecNumber>
    </recommendedName>
</protein>
<organism>
    <name type="scientific">Clostridium saccharobutylicum</name>
    <dbReference type="NCBI Taxonomy" id="169679"/>
    <lineage>
        <taxon>Bacteria</taxon>
        <taxon>Bacillati</taxon>
        <taxon>Bacillota</taxon>
        <taxon>Clostridia</taxon>
        <taxon>Eubacteriales</taxon>
        <taxon>Clostridiaceae</taxon>
        <taxon>Clostridium</taxon>
    </lineage>
</organism>
<gene>
    <name type="primary">adh1</name>
</gene>
<accession>P13604</accession>
<evidence type="ECO:0000305" key="1"/>
<evidence type="ECO:0000305" key="2">
    <source>
    </source>
</evidence>